<comment type="subcellular location">
    <subcellularLocation>
        <location evidence="1">Nucleus</location>
    </subcellularLocation>
</comment>
<organism>
    <name type="scientific">Arabidopsis thaliana</name>
    <name type="common">Mouse-ear cress</name>
    <dbReference type="NCBI Taxonomy" id="3702"/>
    <lineage>
        <taxon>Eukaryota</taxon>
        <taxon>Viridiplantae</taxon>
        <taxon>Streptophyta</taxon>
        <taxon>Embryophyta</taxon>
        <taxon>Tracheophyta</taxon>
        <taxon>Spermatophyta</taxon>
        <taxon>Magnoliopsida</taxon>
        <taxon>eudicotyledons</taxon>
        <taxon>Gunneridae</taxon>
        <taxon>Pentapetalae</taxon>
        <taxon>rosids</taxon>
        <taxon>malvids</taxon>
        <taxon>Brassicales</taxon>
        <taxon>Brassicaceae</taxon>
        <taxon>Camelineae</taxon>
        <taxon>Arabidopsis</taxon>
    </lineage>
</organism>
<proteinExistence type="evidence at transcript level"/>
<name>Y3518_ARATH</name>
<accession>Q9LSF7</accession>
<reference key="1">
    <citation type="journal article" date="2000" name="DNA Res.">
        <title>Structural analysis of Arabidopsis thaliana chromosome 3. I. Sequence features of the regions of 4,504,864 bp covered by sixty P1 and TAC clones.</title>
        <authorList>
            <person name="Sato S."/>
            <person name="Nakamura Y."/>
            <person name="Kaneko T."/>
            <person name="Katoh T."/>
            <person name="Asamizu E."/>
            <person name="Tabata S."/>
        </authorList>
    </citation>
    <scope>NUCLEOTIDE SEQUENCE [LARGE SCALE GENOMIC DNA]</scope>
    <source>
        <strain>cv. Columbia</strain>
    </source>
</reference>
<reference key="2">
    <citation type="journal article" date="2017" name="Plant J.">
        <title>Araport11: a complete reannotation of the Arabidopsis thaliana reference genome.</title>
        <authorList>
            <person name="Cheng C.Y."/>
            <person name="Krishnakumar V."/>
            <person name="Chan A.P."/>
            <person name="Thibaud-Nissen F."/>
            <person name="Schobel S."/>
            <person name="Town C.D."/>
        </authorList>
    </citation>
    <scope>GENOME REANNOTATION</scope>
    <source>
        <strain>cv. Columbia</strain>
    </source>
</reference>
<reference key="3">
    <citation type="journal article" date="2008" name="Trends Plant Sci.">
        <title>The plant B3 superfamily.</title>
        <authorList>
            <person name="Swaminathan K."/>
            <person name="Peterson K."/>
            <person name="Jack T."/>
        </authorList>
    </citation>
    <scope>GENE FAMILY</scope>
</reference>
<protein>
    <recommendedName>
        <fullName>B3 domain-containing protein At3g25182</fullName>
    </recommendedName>
</protein>
<evidence type="ECO:0000255" key="1">
    <source>
        <dbReference type="PROSITE-ProRule" id="PRU00326"/>
    </source>
</evidence>
<evidence type="ECO:0000256" key="2">
    <source>
        <dbReference type="SAM" id="MobiDB-lite"/>
    </source>
</evidence>
<feature type="chain" id="PRO_0000375140" description="B3 domain-containing protein At3g25182">
    <location>
        <begin position="1"/>
        <end position="346"/>
    </location>
</feature>
<feature type="DNA-binding region" description="TF-B3" evidence="1">
    <location>
        <begin position="237"/>
        <end position="338"/>
    </location>
</feature>
<feature type="region of interest" description="Disordered" evidence="2">
    <location>
        <begin position="168"/>
        <end position="187"/>
    </location>
</feature>
<dbReference type="EMBL" id="AB026647">
    <property type="protein sequence ID" value="BAB02078.1"/>
    <property type="molecule type" value="Genomic_DNA"/>
</dbReference>
<dbReference type="EMBL" id="CP002686">
    <property type="status" value="NOT_ANNOTATED_CDS"/>
    <property type="molecule type" value="Genomic_DNA"/>
</dbReference>
<dbReference type="Araport" id="AT3G25182"/>
<dbReference type="TAIR" id="AT3G25182"/>
<dbReference type="InParanoid" id="Q9LSF7"/>
<dbReference type="PRO" id="PR:Q9LSF7"/>
<dbReference type="Proteomes" id="UP000006548">
    <property type="component" value="Chromosome 3"/>
</dbReference>
<dbReference type="ExpressionAtlas" id="Q9LSF7">
    <property type="expression patterns" value="baseline and differential"/>
</dbReference>
<dbReference type="GO" id="GO:0005634">
    <property type="term" value="C:nucleus"/>
    <property type="evidence" value="ECO:0007669"/>
    <property type="project" value="UniProtKB-SubCell"/>
</dbReference>
<dbReference type="GO" id="GO:0003677">
    <property type="term" value="F:DNA binding"/>
    <property type="evidence" value="ECO:0007669"/>
    <property type="project" value="UniProtKB-KW"/>
</dbReference>
<dbReference type="CDD" id="cd10017">
    <property type="entry name" value="B3_DNA"/>
    <property type="match status" value="1"/>
</dbReference>
<dbReference type="Gene3D" id="2.40.330.10">
    <property type="entry name" value="DNA-binding pseudobarrel domain"/>
    <property type="match status" value="1"/>
</dbReference>
<dbReference type="InterPro" id="IPR005508">
    <property type="entry name" value="At2g31720-like"/>
</dbReference>
<dbReference type="InterPro" id="IPR003340">
    <property type="entry name" value="B3_DNA-bd"/>
</dbReference>
<dbReference type="InterPro" id="IPR015300">
    <property type="entry name" value="DNA-bd_pseudobarrel_sf"/>
</dbReference>
<dbReference type="PANTHER" id="PTHR31541">
    <property type="entry name" value="B3 DOMAIN PLANT PROTEIN-RELATED"/>
    <property type="match status" value="1"/>
</dbReference>
<dbReference type="PANTHER" id="PTHR31541:SF34">
    <property type="entry name" value="TF-B3 DOMAIN-CONTAINING PROTEIN"/>
    <property type="match status" value="1"/>
</dbReference>
<dbReference type="Pfam" id="PF03754">
    <property type="entry name" value="At2g31720-like"/>
    <property type="match status" value="1"/>
</dbReference>
<dbReference type="SUPFAM" id="SSF101936">
    <property type="entry name" value="DNA-binding pseudobarrel domain"/>
    <property type="match status" value="1"/>
</dbReference>
<dbReference type="PROSITE" id="PS50863">
    <property type="entry name" value="B3"/>
    <property type="match status" value="1"/>
</dbReference>
<sequence>MTSMYYNHDHLTASGKNMWSNFYVLVDTAVMLYEEEKQRRKIVSEEEEETQKRIFCLFPRKTRSSLVKRQQKLSGFLTSASSSLIDLNQFPSDSEIEDPLNHHQLLSSSCFIAADFETLQNPSSEPCSSLVLFDCKTAGSEKTETKDPPNPNFPCPLSLCLTENKNRKRRAVEQRKRTGGVKKAKVAPFSQTARETPEWLVNVMRDMKEAKDAKLIFEKTLFVTDVNPTQNRLSMPFNNLLRNDFLTSVESRIIDKDIKNDKKIGVGAILVDQRCKKWGVMLKRWEMKKESGKGSWNYNLICGWNDIVEANGLKEGDNISLWSFRSCGILCFAMEQRSPSLALCLC</sequence>
<keyword id="KW-0238">DNA-binding</keyword>
<keyword id="KW-0539">Nucleus</keyword>
<keyword id="KW-1185">Reference proteome</keyword>
<keyword id="KW-0804">Transcription</keyword>
<keyword id="KW-0805">Transcription regulation</keyword>
<gene>
    <name type="ordered locus">At3g25182</name>
    <name type="ORF">MJL12.14</name>
</gene>